<accession>Q5Z6N9</accession>
<sequence>MAAHQGMAAATAADRFCLPRMAAAAAAASQVENWGDSGVIVSSPFTDDTSTDLDDSADKHHLHALVGGGDGGDDAGEQRGADSSAVSKERRGDQKMQRRLAQNREAARKSRMRKKAYIQQLESSRSKLMHLEQELQRARQQGIFIATGGSGDHGHSIGGNGTLAFDLEYARWLDEHQRHINDLRVALNAQMSDDELCELVDAVMMHYDQVFRLKSFATKSDVFHVLSGMWMSPAERFFMWLGGFRSSELLKVLASHLEPLTDQQLMGICNLQQSSQQAEDALSQGMEALQQTLGDTLVSAAATVVSGGGGADNVTNYMGQMAIAMAKLTTLENFLRQADLLRHQTLQQMHRILTTRQAARALLVISDYFSRLRALSSLWLARPRD</sequence>
<reference key="1">
    <citation type="journal article" date="2005" name="Nature">
        <title>The map-based sequence of the rice genome.</title>
        <authorList>
            <consortium name="International rice genome sequencing project (IRGSP)"/>
        </authorList>
    </citation>
    <scope>NUCLEOTIDE SEQUENCE [LARGE SCALE GENOMIC DNA]</scope>
    <source>
        <strain>cv. Nipponbare</strain>
    </source>
</reference>
<reference key="2">
    <citation type="journal article" date="2008" name="Nucleic Acids Res.">
        <title>The rice annotation project database (RAP-DB): 2008 update.</title>
        <authorList>
            <consortium name="The rice annotation project (RAP)"/>
        </authorList>
    </citation>
    <scope>GENOME REANNOTATION</scope>
    <source>
        <strain>cv. Nipponbare</strain>
    </source>
</reference>
<reference key="3">
    <citation type="journal article" date="2013" name="Rice">
        <title>Improvement of the Oryza sativa Nipponbare reference genome using next generation sequence and optical map data.</title>
        <authorList>
            <person name="Kawahara Y."/>
            <person name="de la Bastide M."/>
            <person name="Hamilton J.P."/>
            <person name="Kanamori H."/>
            <person name="McCombie W.R."/>
            <person name="Ouyang S."/>
            <person name="Schwartz D.C."/>
            <person name="Tanaka T."/>
            <person name="Wu J."/>
            <person name="Zhou S."/>
            <person name="Childs K.L."/>
            <person name="Davidson R.M."/>
            <person name="Lin H."/>
            <person name="Quesada-Ocampo L."/>
            <person name="Vaillancourt B."/>
            <person name="Sakai H."/>
            <person name="Lee S.S."/>
            <person name="Kim J."/>
            <person name="Numa H."/>
            <person name="Itoh T."/>
            <person name="Buell C.R."/>
            <person name="Matsumoto T."/>
        </authorList>
    </citation>
    <scope>GENOME REANNOTATION</scope>
    <source>
        <strain>cv. Nipponbare</strain>
    </source>
</reference>
<reference key="4">
    <citation type="journal article" date="2003" name="Science">
        <title>Collection, mapping, and annotation of over 28,000 cDNA clones from japonica rice.</title>
        <authorList>
            <consortium name="The rice full-length cDNA consortium"/>
        </authorList>
    </citation>
    <scope>NUCLEOTIDE SEQUENCE [LARGE SCALE MRNA]</scope>
    <source>
        <strain>cv. Nipponbare</strain>
    </source>
</reference>
<reference key="5">
    <citation type="journal article" date="2008" name="Plant Physiol.">
        <title>Genomic survey and gene expression analysis of the basic leucine zipper transcription factor family in rice.</title>
        <authorList>
            <person name="Nijhawan A."/>
            <person name="Jain M."/>
            <person name="Tyagi A.K."/>
            <person name="Khurana J.P."/>
        </authorList>
    </citation>
    <scope>GENE FAMILY</scope>
    <scope>NOMENCLATURE</scope>
</reference>
<reference key="6">
    <citation type="journal article" date="2014" name="BMC Genomics">
        <title>Interaction specificity and coexpression of rice NPR1 homologs 1 and 3 (NH1 and NH3), TGA transcription factors and negative regulator of resistance (NRR) proteins.</title>
        <authorList>
            <person name="Chern M."/>
            <person name="Bai W."/>
            <person name="Ruan D."/>
            <person name="Oh T."/>
            <person name="Chen X."/>
            <person name="Ronald P.C."/>
        </authorList>
    </citation>
    <scope>INTERACTION WITH NPR1/NH1; NPR2/NH2 AND NPR3/NH3</scope>
</reference>
<feature type="chain" id="PRO_0000437017" description="Transcription factor TGAL3">
    <location>
        <begin position="1"/>
        <end position="385"/>
    </location>
</feature>
<feature type="domain" description="bZIP" evidence="2">
    <location>
        <begin position="93"/>
        <end position="137"/>
    </location>
</feature>
<feature type="domain" description="DOG1" evidence="3">
    <location>
        <begin position="162"/>
        <end position="382"/>
    </location>
</feature>
<feature type="region of interest" description="Disordered" evidence="4">
    <location>
        <begin position="62"/>
        <end position="113"/>
    </location>
</feature>
<feature type="region of interest" description="Basic motif" evidence="2">
    <location>
        <begin position="95"/>
        <end position="115"/>
    </location>
</feature>
<feature type="region of interest" description="Leucine-zipper" evidence="2">
    <location>
        <begin position="121"/>
        <end position="135"/>
    </location>
</feature>
<feature type="compositionally biased region" description="Basic and acidic residues" evidence="4">
    <location>
        <begin position="87"/>
        <end position="96"/>
    </location>
</feature>
<dbReference type="EMBL" id="AP005382">
    <property type="protein sequence ID" value="BAD54380.1"/>
    <property type="molecule type" value="Genomic_DNA"/>
</dbReference>
<dbReference type="EMBL" id="AP008212">
    <property type="protein sequence ID" value="BAF19256.1"/>
    <property type="molecule type" value="Genomic_DNA"/>
</dbReference>
<dbReference type="EMBL" id="AP014962">
    <property type="protein sequence ID" value="BAS97148.1"/>
    <property type="molecule type" value="Genomic_DNA"/>
</dbReference>
<dbReference type="EMBL" id="AK109719">
    <property type="protein sequence ID" value="BAG98871.1"/>
    <property type="molecule type" value="mRNA"/>
</dbReference>
<dbReference type="SMR" id="Q5Z6N9"/>
<dbReference type="STRING" id="39947.Q5Z6N9"/>
<dbReference type="PaxDb" id="39947-Q5Z6N9"/>
<dbReference type="EnsemblPlants" id="Os06t0265400-01">
    <property type="protein sequence ID" value="Os06t0265400-01"/>
    <property type="gene ID" value="Os06g0265400"/>
</dbReference>
<dbReference type="Gramene" id="Os06t0265400-01">
    <property type="protein sequence ID" value="Os06t0265400-01"/>
    <property type="gene ID" value="Os06g0265400"/>
</dbReference>
<dbReference type="KEGG" id="dosa:Os06g0265400"/>
<dbReference type="eggNOG" id="ENOG502QWDU">
    <property type="taxonomic scope" value="Eukaryota"/>
</dbReference>
<dbReference type="HOGENOM" id="CLU_024782_1_2_1"/>
<dbReference type="InParanoid" id="Q5Z6N9"/>
<dbReference type="OMA" id="GDHGHSI"/>
<dbReference type="Proteomes" id="UP000000763">
    <property type="component" value="Chromosome 6"/>
</dbReference>
<dbReference type="Proteomes" id="UP000059680">
    <property type="component" value="Chromosome 6"/>
</dbReference>
<dbReference type="GO" id="GO:0005634">
    <property type="term" value="C:nucleus"/>
    <property type="evidence" value="ECO:0007669"/>
    <property type="project" value="UniProtKB-SubCell"/>
</dbReference>
<dbReference type="GO" id="GO:0003700">
    <property type="term" value="F:DNA-binding transcription factor activity"/>
    <property type="evidence" value="ECO:0007669"/>
    <property type="project" value="InterPro"/>
</dbReference>
<dbReference type="GO" id="GO:0043565">
    <property type="term" value="F:sequence-specific DNA binding"/>
    <property type="evidence" value="ECO:0007669"/>
    <property type="project" value="InterPro"/>
</dbReference>
<dbReference type="GO" id="GO:0006952">
    <property type="term" value="P:defense response"/>
    <property type="evidence" value="ECO:0007669"/>
    <property type="project" value="UniProtKB-KW"/>
</dbReference>
<dbReference type="GO" id="GO:0006351">
    <property type="term" value="P:DNA-templated transcription"/>
    <property type="evidence" value="ECO:0007669"/>
    <property type="project" value="InterPro"/>
</dbReference>
<dbReference type="FunFam" id="1.20.5.170:FF:000019">
    <property type="entry name" value="BZIP family transcription factor"/>
    <property type="match status" value="1"/>
</dbReference>
<dbReference type="Gene3D" id="1.20.5.170">
    <property type="match status" value="1"/>
</dbReference>
<dbReference type="InterPro" id="IPR004827">
    <property type="entry name" value="bZIP"/>
</dbReference>
<dbReference type="InterPro" id="IPR046347">
    <property type="entry name" value="bZIP_sf"/>
</dbReference>
<dbReference type="InterPro" id="IPR025422">
    <property type="entry name" value="TGA_domain"/>
</dbReference>
<dbReference type="PANTHER" id="PTHR45693:SF1">
    <property type="entry name" value="TRANSCRIPTION FACTOR PERIANTHIA"/>
    <property type="match status" value="1"/>
</dbReference>
<dbReference type="PANTHER" id="PTHR45693">
    <property type="entry name" value="TRANSCRIPTION FACTOR TGA9"/>
    <property type="match status" value="1"/>
</dbReference>
<dbReference type="Pfam" id="PF00170">
    <property type="entry name" value="bZIP_1"/>
    <property type="match status" value="1"/>
</dbReference>
<dbReference type="Pfam" id="PF14144">
    <property type="entry name" value="DOG1"/>
    <property type="match status" value="1"/>
</dbReference>
<dbReference type="SMART" id="SM00338">
    <property type="entry name" value="BRLZ"/>
    <property type="match status" value="1"/>
</dbReference>
<dbReference type="SUPFAM" id="SSF57959">
    <property type="entry name" value="Leucine zipper domain"/>
    <property type="match status" value="1"/>
</dbReference>
<dbReference type="PROSITE" id="PS50217">
    <property type="entry name" value="BZIP"/>
    <property type="match status" value="1"/>
</dbReference>
<dbReference type="PROSITE" id="PS00036">
    <property type="entry name" value="BZIP_BASIC"/>
    <property type="match status" value="1"/>
</dbReference>
<dbReference type="PROSITE" id="PS51806">
    <property type="entry name" value="DOG1"/>
    <property type="match status" value="1"/>
</dbReference>
<protein>
    <recommendedName>
        <fullName evidence="8">Transcription factor TGAL3</fullName>
    </recommendedName>
    <alternativeName>
        <fullName evidence="6">bZIP transcription factor 47</fullName>
        <shortName evidence="6">OsbZIP47</shortName>
    </alternativeName>
</protein>
<comment type="function">
    <text evidence="1">Transcriptional regulator involved in defense response.</text>
</comment>
<comment type="subunit">
    <text evidence="5">Interacts with NPR1/NH1, NPR2/NH2 and NPR3/NH3.</text>
</comment>
<comment type="subcellular location">
    <subcellularLocation>
        <location evidence="2">Nucleus</location>
    </subcellularLocation>
</comment>
<comment type="similarity">
    <text evidence="8">Belongs to the bZIP family.</text>
</comment>
<keyword id="KW-0238">DNA-binding</keyword>
<keyword id="KW-0539">Nucleus</keyword>
<keyword id="KW-0611">Plant defense</keyword>
<keyword id="KW-1185">Reference proteome</keyword>
<keyword id="KW-0804">Transcription</keyword>
<keyword id="KW-0805">Transcription regulation</keyword>
<proteinExistence type="evidence at protein level"/>
<organism>
    <name type="scientific">Oryza sativa subsp. japonica</name>
    <name type="common">Rice</name>
    <dbReference type="NCBI Taxonomy" id="39947"/>
    <lineage>
        <taxon>Eukaryota</taxon>
        <taxon>Viridiplantae</taxon>
        <taxon>Streptophyta</taxon>
        <taxon>Embryophyta</taxon>
        <taxon>Tracheophyta</taxon>
        <taxon>Spermatophyta</taxon>
        <taxon>Magnoliopsida</taxon>
        <taxon>Liliopsida</taxon>
        <taxon>Poales</taxon>
        <taxon>Poaceae</taxon>
        <taxon>BOP clade</taxon>
        <taxon>Oryzoideae</taxon>
        <taxon>Oryzeae</taxon>
        <taxon>Oryzinae</taxon>
        <taxon>Oryza</taxon>
        <taxon>Oryza sativa</taxon>
    </lineage>
</organism>
<gene>
    <name evidence="7" type="primary">TGAL3</name>
    <name evidence="10" type="ordered locus">Os06g0265400</name>
    <name evidence="8" type="ordered locus">LOC_Os06g15480</name>
    <name evidence="9" type="ORF">OJ1001_B06.18</name>
</gene>
<evidence type="ECO:0000250" key="1">
    <source>
        <dbReference type="UniProtKB" id="Q7X993"/>
    </source>
</evidence>
<evidence type="ECO:0000255" key="2">
    <source>
        <dbReference type="PROSITE-ProRule" id="PRU00978"/>
    </source>
</evidence>
<evidence type="ECO:0000255" key="3">
    <source>
        <dbReference type="PROSITE-ProRule" id="PRU01147"/>
    </source>
</evidence>
<evidence type="ECO:0000256" key="4">
    <source>
        <dbReference type="SAM" id="MobiDB-lite"/>
    </source>
</evidence>
<evidence type="ECO:0000269" key="5">
    <source>
    </source>
</evidence>
<evidence type="ECO:0000303" key="6">
    <source>
    </source>
</evidence>
<evidence type="ECO:0000303" key="7">
    <source>
    </source>
</evidence>
<evidence type="ECO:0000305" key="8"/>
<evidence type="ECO:0000312" key="9">
    <source>
        <dbReference type="EMBL" id="BAD54380.1"/>
    </source>
</evidence>
<evidence type="ECO:0000312" key="10">
    <source>
        <dbReference type="EMBL" id="BAF19256.1"/>
    </source>
</evidence>
<name>TGAL3_ORYSJ</name>